<dbReference type="EC" id="2.8.1.-" evidence="1"/>
<dbReference type="EMBL" id="AE005674">
    <property type="protein sequence ID" value="AAN44826.1"/>
    <property type="molecule type" value="Genomic_DNA"/>
</dbReference>
<dbReference type="EMBL" id="AE014073">
    <property type="protein sequence ID" value="AAP19351.1"/>
    <property type="molecule type" value="Genomic_DNA"/>
</dbReference>
<dbReference type="RefSeq" id="WP_001209706.1">
    <property type="nucleotide sequence ID" value="NZ_WPGW01000003.1"/>
</dbReference>
<dbReference type="SMR" id="Q83JC0"/>
<dbReference type="STRING" id="198214.SF3363"/>
<dbReference type="PaxDb" id="198214-SF3363"/>
<dbReference type="KEGG" id="sfl:SF3363"/>
<dbReference type="KEGG" id="sfx:S4399"/>
<dbReference type="PATRIC" id="fig|198214.7.peg.3973"/>
<dbReference type="HOGENOM" id="CLU_132095_0_0_6"/>
<dbReference type="Proteomes" id="UP000001006">
    <property type="component" value="Chromosome"/>
</dbReference>
<dbReference type="Proteomes" id="UP000002673">
    <property type="component" value="Chromosome"/>
</dbReference>
<dbReference type="GO" id="GO:1990228">
    <property type="term" value="C:sulfurtransferase complex"/>
    <property type="evidence" value="ECO:0007669"/>
    <property type="project" value="TreeGrafter"/>
</dbReference>
<dbReference type="GO" id="GO:0097163">
    <property type="term" value="F:sulfur carrier activity"/>
    <property type="evidence" value="ECO:0007669"/>
    <property type="project" value="TreeGrafter"/>
</dbReference>
<dbReference type="GO" id="GO:0016783">
    <property type="term" value="F:sulfurtransferase activity"/>
    <property type="evidence" value="ECO:0007669"/>
    <property type="project" value="UniProtKB-UniRule"/>
</dbReference>
<dbReference type="GO" id="GO:0002143">
    <property type="term" value="P:tRNA wobble position uridine thiolation"/>
    <property type="evidence" value="ECO:0007669"/>
    <property type="project" value="TreeGrafter"/>
</dbReference>
<dbReference type="FunFam" id="3.40.1260.10:FF:000001">
    <property type="entry name" value="Sulfurtransferase TusD"/>
    <property type="match status" value="1"/>
</dbReference>
<dbReference type="Gene3D" id="3.40.1260.10">
    <property type="entry name" value="DsrEFH-like"/>
    <property type="match status" value="1"/>
</dbReference>
<dbReference type="HAMAP" id="MF_00390">
    <property type="entry name" value="Thiourid_synth_D"/>
    <property type="match status" value="1"/>
</dbReference>
<dbReference type="InterPro" id="IPR027396">
    <property type="entry name" value="DsrEFH-like"/>
</dbReference>
<dbReference type="InterPro" id="IPR003787">
    <property type="entry name" value="Sulphur_relay_DsrE/F-like"/>
</dbReference>
<dbReference type="InterPro" id="IPR017463">
    <property type="entry name" value="Sulphur_relay_TusD/DsrE"/>
</dbReference>
<dbReference type="NCBIfam" id="NF001237">
    <property type="entry name" value="PRK00207.1"/>
    <property type="match status" value="1"/>
</dbReference>
<dbReference type="NCBIfam" id="TIGR03012">
    <property type="entry name" value="sulf_tusD_dsrE"/>
    <property type="match status" value="1"/>
</dbReference>
<dbReference type="PANTHER" id="PTHR34874">
    <property type="entry name" value="PROTEIN YCHN"/>
    <property type="match status" value="1"/>
</dbReference>
<dbReference type="PANTHER" id="PTHR34874:SF3">
    <property type="entry name" value="SULFURTRANSFERASE TUSD"/>
    <property type="match status" value="1"/>
</dbReference>
<dbReference type="Pfam" id="PF02635">
    <property type="entry name" value="DsrE"/>
    <property type="match status" value="1"/>
</dbReference>
<dbReference type="SUPFAM" id="SSF75169">
    <property type="entry name" value="DsrEFH-like"/>
    <property type="match status" value="1"/>
</dbReference>
<reference key="1">
    <citation type="journal article" date="2002" name="Nucleic Acids Res.">
        <title>Genome sequence of Shigella flexneri 2a: insights into pathogenicity through comparison with genomes of Escherichia coli K12 and O157.</title>
        <authorList>
            <person name="Jin Q."/>
            <person name="Yuan Z."/>
            <person name="Xu J."/>
            <person name="Wang Y."/>
            <person name="Shen Y."/>
            <person name="Lu W."/>
            <person name="Wang J."/>
            <person name="Liu H."/>
            <person name="Yang J."/>
            <person name="Yang F."/>
            <person name="Zhang X."/>
            <person name="Zhang J."/>
            <person name="Yang G."/>
            <person name="Wu H."/>
            <person name="Qu D."/>
            <person name="Dong J."/>
            <person name="Sun L."/>
            <person name="Xue Y."/>
            <person name="Zhao A."/>
            <person name="Gao Y."/>
            <person name="Zhu J."/>
            <person name="Kan B."/>
            <person name="Ding K."/>
            <person name="Chen S."/>
            <person name="Cheng H."/>
            <person name="Yao Z."/>
            <person name="He B."/>
            <person name="Chen R."/>
            <person name="Ma D."/>
            <person name="Qiang B."/>
            <person name="Wen Y."/>
            <person name="Hou Y."/>
            <person name="Yu J."/>
        </authorList>
    </citation>
    <scope>NUCLEOTIDE SEQUENCE [LARGE SCALE GENOMIC DNA]</scope>
    <source>
        <strain>301 / Serotype 2a</strain>
    </source>
</reference>
<reference key="2">
    <citation type="journal article" date="2003" name="Infect. Immun.">
        <title>Complete genome sequence and comparative genomics of Shigella flexneri serotype 2a strain 2457T.</title>
        <authorList>
            <person name="Wei J."/>
            <person name="Goldberg M.B."/>
            <person name="Burland V."/>
            <person name="Venkatesan M.M."/>
            <person name="Deng W."/>
            <person name="Fournier G."/>
            <person name="Mayhew G.F."/>
            <person name="Plunkett G. III"/>
            <person name="Rose D.J."/>
            <person name="Darling A."/>
            <person name="Mau B."/>
            <person name="Perna N.T."/>
            <person name="Payne S.M."/>
            <person name="Runyen-Janecky L.J."/>
            <person name="Zhou S."/>
            <person name="Schwartz D.C."/>
            <person name="Blattner F.R."/>
        </authorList>
    </citation>
    <scope>NUCLEOTIDE SEQUENCE [LARGE SCALE GENOMIC DNA]</scope>
    <source>
        <strain>ATCC 700930 / 2457T / Serotype 2a</strain>
    </source>
</reference>
<feature type="chain" id="PRO_0000214735" description="Sulfurtransferase TusD">
    <location>
        <begin position="1"/>
        <end position="128"/>
    </location>
</feature>
<feature type="active site" description="Cysteine persulfide intermediate" evidence="1">
    <location>
        <position position="78"/>
    </location>
</feature>
<name>TUSD_SHIFL</name>
<proteinExistence type="inferred from homology"/>
<evidence type="ECO:0000255" key="1">
    <source>
        <dbReference type="HAMAP-Rule" id="MF_00390"/>
    </source>
</evidence>
<accession>Q83JC0</accession>
<accession>Q7BYR0</accession>
<gene>
    <name evidence="1" type="primary">tusD</name>
    <name type="ordered locus">SF3363</name>
    <name type="ordered locus">S4399</name>
</gene>
<comment type="function">
    <text evidence="1">Part of a sulfur-relay system required for 2-thiolation of 5-methylaminomethyl-2-thiouridine (mnm(5)s(2)U) at tRNA wobble positions. Accepts sulfur from TusA and transfers it in turn to TusE.</text>
</comment>
<comment type="subunit">
    <text evidence="1">Heterohexamer, formed by a dimer of trimers. The hexameric TusBCD complex contains 2 copies each of TusB, TusC and TusD. The TusBCD complex interacts with TusE.</text>
</comment>
<comment type="subcellular location">
    <subcellularLocation>
        <location evidence="1">Cytoplasm</location>
    </subcellularLocation>
</comment>
<comment type="similarity">
    <text evidence="1">Belongs to the DsrE/TusD family.</text>
</comment>
<sequence>MRFAIVVTGPAYGTQQASSAFQFAQALIAEGHKLSSVFFYREGVYNANQLTSPASDEFDLVRGWQQLNAQHGVALNICVAAALRRGIVDETEAGRLGLASSNLQPGFTLSGLGALAEASLTCDRVVQF</sequence>
<keyword id="KW-0963">Cytoplasm</keyword>
<keyword id="KW-1185">Reference proteome</keyword>
<keyword id="KW-0808">Transferase</keyword>
<keyword id="KW-0819">tRNA processing</keyword>
<organism>
    <name type="scientific">Shigella flexneri</name>
    <dbReference type="NCBI Taxonomy" id="623"/>
    <lineage>
        <taxon>Bacteria</taxon>
        <taxon>Pseudomonadati</taxon>
        <taxon>Pseudomonadota</taxon>
        <taxon>Gammaproteobacteria</taxon>
        <taxon>Enterobacterales</taxon>
        <taxon>Enterobacteriaceae</taxon>
        <taxon>Shigella</taxon>
    </lineage>
</organism>
<protein>
    <recommendedName>
        <fullName evidence="1">Sulfurtransferase TusD</fullName>
        <ecNumber evidence="1">2.8.1.-</ecNumber>
    </recommendedName>
    <alternativeName>
        <fullName evidence="1">tRNA 2-thiouridine synthesizing protein D</fullName>
    </alternativeName>
</protein>